<reference key="1">
    <citation type="journal article" date="2006" name="BMC Plant Biol.">
        <title>The complete chloroplast genome sequence of Citrus sinensis (L.) Osbeck var 'Ridge Pineapple': organization and phylogenetic relationships to other angiosperms.</title>
        <authorList>
            <person name="Bausher M.G."/>
            <person name="Singh N.D."/>
            <person name="Lee S.-B."/>
            <person name="Jansen R.K."/>
            <person name="Daniell H."/>
        </authorList>
    </citation>
    <scope>NUCLEOTIDE SEQUENCE [LARGE SCALE GENOMIC DNA]</scope>
    <source>
        <strain>cv. Osbeck var. Ridge Pineapple</strain>
    </source>
</reference>
<dbReference type="EMBL" id="DQ864733">
    <property type="protein sequence ID" value="ABI49048.1"/>
    <property type="molecule type" value="Genomic_DNA"/>
</dbReference>
<dbReference type="RefSeq" id="YP_740505.1">
    <property type="nucleotide sequence ID" value="NC_008334.1"/>
</dbReference>
<dbReference type="SMR" id="Q09ME8"/>
<dbReference type="GeneID" id="4271128"/>
<dbReference type="KEGG" id="cit:4271128"/>
<dbReference type="OrthoDB" id="684127at71240"/>
<dbReference type="GO" id="GO:0009535">
    <property type="term" value="C:chloroplast thylakoid membrane"/>
    <property type="evidence" value="ECO:0007669"/>
    <property type="project" value="UniProtKB-SubCell"/>
</dbReference>
<dbReference type="GO" id="GO:0009523">
    <property type="term" value="C:photosystem II"/>
    <property type="evidence" value="ECO:0007669"/>
    <property type="project" value="UniProtKB-KW"/>
</dbReference>
<dbReference type="GO" id="GO:0042301">
    <property type="term" value="F:phosphate ion binding"/>
    <property type="evidence" value="ECO:0007669"/>
    <property type="project" value="InterPro"/>
</dbReference>
<dbReference type="GO" id="GO:0015979">
    <property type="term" value="P:photosynthesis"/>
    <property type="evidence" value="ECO:0007669"/>
    <property type="project" value="UniProtKB-UniRule"/>
</dbReference>
<dbReference type="GO" id="GO:0050821">
    <property type="term" value="P:protein stabilization"/>
    <property type="evidence" value="ECO:0007669"/>
    <property type="project" value="InterPro"/>
</dbReference>
<dbReference type="FunFam" id="1.20.5.880:FF:000001">
    <property type="entry name" value="Photosystem II reaction center protein H"/>
    <property type="match status" value="1"/>
</dbReference>
<dbReference type="Gene3D" id="1.20.5.880">
    <property type="entry name" value="Photosystem II reaction center protein H"/>
    <property type="match status" value="1"/>
</dbReference>
<dbReference type="HAMAP" id="MF_00752">
    <property type="entry name" value="PSII_PsbH"/>
    <property type="match status" value="1"/>
</dbReference>
<dbReference type="InterPro" id="IPR001056">
    <property type="entry name" value="PSII_PsbH"/>
</dbReference>
<dbReference type="InterPro" id="IPR036863">
    <property type="entry name" value="PSII_PsbH_sf"/>
</dbReference>
<dbReference type="NCBIfam" id="NF002728">
    <property type="entry name" value="PRK02624.1"/>
    <property type="match status" value="1"/>
</dbReference>
<dbReference type="PANTHER" id="PTHR34469">
    <property type="entry name" value="PHOTOSYSTEM II REACTION CENTER PROTEIN H"/>
    <property type="match status" value="1"/>
</dbReference>
<dbReference type="PANTHER" id="PTHR34469:SF4">
    <property type="entry name" value="PHOTOSYSTEM II REACTION CENTER PROTEIN H"/>
    <property type="match status" value="1"/>
</dbReference>
<dbReference type="Pfam" id="PF00737">
    <property type="entry name" value="PsbH"/>
    <property type="match status" value="1"/>
</dbReference>
<dbReference type="SUPFAM" id="SSF161025">
    <property type="entry name" value="Photosystem II 10 kDa phosphoprotein PsbH"/>
    <property type="match status" value="1"/>
</dbReference>
<keyword id="KW-0150">Chloroplast</keyword>
<keyword id="KW-0472">Membrane</keyword>
<keyword id="KW-0597">Phosphoprotein</keyword>
<keyword id="KW-0602">Photosynthesis</keyword>
<keyword id="KW-0604">Photosystem II</keyword>
<keyword id="KW-0934">Plastid</keyword>
<keyword id="KW-0793">Thylakoid</keyword>
<keyword id="KW-0812">Transmembrane</keyword>
<keyword id="KW-1133">Transmembrane helix</keyword>
<gene>
    <name evidence="2" type="primary">psbH</name>
</gene>
<proteinExistence type="inferred from homology"/>
<evidence type="ECO:0000250" key="1">
    <source>
        <dbReference type="UniProtKB" id="P56780"/>
    </source>
</evidence>
<evidence type="ECO:0000255" key="2">
    <source>
        <dbReference type="HAMAP-Rule" id="MF_00752"/>
    </source>
</evidence>
<evidence type="ECO:0000256" key="3">
    <source>
        <dbReference type="SAM" id="MobiDB-lite"/>
    </source>
</evidence>
<geneLocation type="chloroplast"/>
<organism>
    <name type="scientific">Citrus sinensis</name>
    <name type="common">Sweet orange</name>
    <name type="synonym">Citrus aurantium var. sinensis</name>
    <dbReference type="NCBI Taxonomy" id="2711"/>
    <lineage>
        <taxon>Eukaryota</taxon>
        <taxon>Viridiplantae</taxon>
        <taxon>Streptophyta</taxon>
        <taxon>Embryophyta</taxon>
        <taxon>Tracheophyta</taxon>
        <taxon>Spermatophyta</taxon>
        <taxon>Magnoliopsida</taxon>
        <taxon>eudicotyledons</taxon>
        <taxon>Gunneridae</taxon>
        <taxon>Pentapetalae</taxon>
        <taxon>rosids</taxon>
        <taxon>malvids</taxon>
        <taxon>Sapindales</taxon>
        <taxon>Rutaceae</taxon>
        <taxon>Aurantioideae</taxon>
        <taxon>Citrus</taxon>
    </lineage>
</organism>
<sequence>MATQTVEGSSRARPKRTSAGGLLKPLNSEYGKVAPGWGTTPLMGVAMALFAVFLSIILEIYNSSVLLDGISLN</sequence>
<feature type="initiator methionine" description="Removed" evidence="1">
    <location>
        <position position="1"/>
    </location>
</feature>
<feature type="chain" id="PRO_0000275748" description="Photosystem II reaction center protein H">
    <location>
        <begin position="2"/>
        <end position="73"/>
    </location>
</feature>
<feature type="transmembrane region" description="Helical" evidence="2">
    <location>
        <begin position="41"/>
        <end position="61"/>
    </location>
</feature>
<feature type="region of interest" description="Disordered" evidence="3">
    <location>
        <begin position="1"/>
        <end position="24"/>
    </location>
</feature>
<feature type="modified residue" description="Phosphothreonine" evidence="2">
    <location>
        <position position="3"/>
    </location>
</feature>
<feature type="modified residue" description="Phosphothreonine" evidence="2">
    <location>
        <position position="5"/>
    </location>
</feature>
<comment type="function">
    <text evidence="2">One of the components of the core complex of photosystem II (PSII), required for its stability and/or assembly. PSII is a light-driven water:plastoquinone oxidoreductase that uses light energy to abstract electrons from H(2)O, generating O(2) and a proton gradient subsequently used for ATP formation. It consists of a core antenna complex that captures photons, and an electron transfer chain that converts photonic excitation into a charge separation.</text>
</comment>
<comment type="subunit">
    <text evidence="2">PSII is composed of 1 copy each of membrane proteins PsbA, PsbB, PsbC, PsbD, PsbE, PsbF, PsbH, PsbI, PsbJ, PsbK, PsbL, PsbM, PsbT, PsbX, PsbY, PsbZ, Psb30/Ycf12, at least 3 peripheral proteins of the oxygen-evolving complex and a large number of cofactors. It forms dimeric complexes.</text>
</comment>
<comment type="subcellular location">
    <subcellularLocation>
        <location evidence="2">Plastid</location>
        <location evidence="2">Chloroplast thylakoid membrane</location>
        <topology evidence="2">Single-pass membrane protein</topology>
    </subcellularLocation>
</comment>
<comment type="PTM">
    <text evidence="2">Phosphorylation is a light-dependent reaction catalyzed by a membrane-bound kinase; phosphorylation occurs on Thr residue(s) in the N-terminus of the protein.</text>
</comment>
<comment type="similarity">
    <text evidence="2">Belongs to the PsbH family.</text>
</comment>
<name>PSBH_CITSI</name>
<protein>
    <recommendedName>
        <fullName evidence="2">Photosystem II reaction center protein H</fullName>
        <shortName evidence="2">PSII-H</shortName>
    </recommendedName>
    <alternativeName>
        <fullName evidence="2">Photosystem II 10 kDa phosphoprotein</fullName>
    </alternativeName>
</protein>
<accession>Q09ME8</accession>